<proteinExistence type="evidence at transcript level"/>
<protein>
    <recommendedName>
        <fullName>Ribonuclease P/MRP protein subunit POP5</fullName>
    </recommendedName>
</protein>
<comment type="function">
    <text evidence="1">Component of ribonuclease P, a protein complex that generates mature tRNA molecules by cleaving their 5'-ends. Also a component of the MRP ribonuclease complex, which cleaves pre-rRNA sequences.</text>
</comment>
<comment type="subunit">
    <text evidence="1">Component of nuclear RNase P and RNase MRP ribonucleoproteins. RNase P consists of a catalytic RNA moiety and 10 different protein chains; POP1, POP4, POP5, POP7, RPP14, RPP21, RPP25, RPP30, RPP38 and RPP40. Within the RNase P complex, POP1, POP7 and RPP25 form the 'finger' subcomplex, POP5, RPP14, RPP40 and homodimeric RPP30 form the 'palm' subcomplex, and RPP21, POP4 and RPP38 form the 'wrist' subcomplex. All subunits of the RNase P complex interact with the catalytic RNA. Several subunits of RNase P are also part of the RNase MRP complex. RNase MRP consists of a catalytic RNA moiety and about 8 protein subunits; POP1, POP7, RPP25, RPP30, RPP38, RPP40 and possibly also POP4 and POP5.</text>
</comment>
<comment type="subcellular location">
    <subcellularLocation>
        <location evidence="1">Nucleus</location>
        <location evidence="1">Nucleolus</location>
    </subcellularLocation>
</comment>
<comment type="similarity">
    <text evidence="2">Belongs to the eukaryotic/archaeal RNase P protein component 2 family.</text>
</comment>
<organism>
    <name type="scientific">Danio rerio</name>
    <name type="common">Zebrafish</name>
    <name type="synonym">Brachydanio rerio</name>
    <dbReference type="NCBI Taxonomy" id="7955"/>
    <lineage>
        <taxon>Eukaryota</taxon>
        <taxon>Metazoa</taxon>
        <taxon>Chordata</taxon>
        <taxon>Craniata</taxon>
        <taxon>Vertebrata</taxon>
        <taxon>Euteleostomi</taxon>
        <taxon>Actinopterygii</taxon>
        <taxon>Neopterygii</taxon>
        <taxon>Teleostei</taxon>
        <taxon>Ostariophysi</taxon>
        <taxon>Cypriniformes</taxon>
        <taxon>Danionidae</taxon>
        <taxon>Danioninae</taxon>
        <taxon>Danio</taxon>
    </lineage>
</organism>
<accession>Q5BJI6</accession>
<sequence length="169" mass="19306">MVRFKSRYLLCELCVSEPSSLHLFEDKVVYQALRGAVNRAHGDYGAAIFNITLGVLVKYLNAHTGVVLIRCRKAHYRLVWSSLPFITFLENRGQKVRCFFNCIHVGGTIRTSQKFLIKYNRQQLQRMLLDCKTDAEKQDVRKAILSCSLNLIKGEETDGSDDDGDEEDT</sequence>
<keyword id="KW-0539">Nucleus</keyword>
<keyword id="KW-1185">Reference proteome</keyword>
<keyword id="KW-0698">rRNA processing</keyword>
<keyword id="KW-0819">tRNA processing</keyword>
<feature type="chain" id="PRO_0000239009" description="Ribonuclease P/MRP protein subunit POP5">
    <location>
        <begin position="1"/>
        <end position="169"/>
    </location>
</feature>
<dbReference type="EMBL" id="BC091467">
    <property type="protein sequence ID" value="AAH91467.1"/>
    <property type="molecule type" value="mRNA"/>
</dbReference>
<dbReference type="RefSeq" id="NP_001013566.1">
    <property type="nucleotide sequence ID" value="NM_001013548.1"/>
</dbReference>
<dbReference type="SMR" id="Q5BJI6"/>
<dbReference type="FunCoup" id="Q5BJI6">
    <property type="interactions" value="1298"/>
</dbReference>
<dbReference type="STRING" id="7955.ENSDARP00000069973"/>
<dbReference type="PaxDb" id="7955-ENSDARP00000069973"/>
<dbReference type="Ensembl" id="ENSDART00000075491">
    <property type="protein sequence ID" value="ENSDARP00000069973"/>
    <property type="gene ID" value="ENSDARG00000053452"/>
</dbReference>
<dbReference type="GeneID" id="541421"/>
<dbReference type="KEGG" id="dre:541421"/>
<dbReference type="AGR" id="ZFIN:ZDB-GENE-050320-123"/>
<dbReference type="CTD" id="51367"/>
<dbReference type="ZFIN" id="ZDB-GENE-050320-123">
    <property type="gene designation" value="pop5"/>
</dbReference>
<dbReference type="eggNOG" id="KOG4639">
    <property type="taxonomic scope" value="Eukaryota"/>
</dbReference>
<dbReference type="HOGENOM" id="CLU_086710_2_0_1"/>
<dbReference type="InParanoid" id="Q5BJI6"/>
<dbReference type="OMA" id="MQNYLDK"/>
<dbReference type="OrthoDB" id="24745at2759"/>
<dbReference type="PhylomeDB" id="Q5BJI6"/>
<dbReference type="TreeFam" id="TF317496"/>
<dbReference type="PRO" id="PR:Q5BJI6"/>
<dbReference type="Proteomes" id="UP000000437">
    <property type="component" value="Chromosome 8"/>
</dbReference>
<dbReference type="Bgee" id="ENSDARG00000053452">
    <property type="expression patterns" value="Expressed in mature ovarian follicle and 25 other cell types or tissues"/>
</dbReference>
<dbReference type="GO" id="GO:0030681">
    <property type="term" value="C:multimeric ribonuclease P complex"/>
    <property type="evidence" value="ECO:0000250"/>
    <property type="project" value="UniProtKB"/>
</dbReference>
<dbReference type="GO" id="GO:0005655">
    <property type="term" value="C:nucleolar ribonuclease P complex"/>
    <property type="evidence" value="ECO:0000318"/>
    <property type="project" value="GO_Central"/>
</dbReference>
<dbReference type="GO" id="GO:0005730">
    <property type="term" value="C:nucleolus"/>
    <property type="evidence" value="ECO:0000250"/>
    <property type="project" value="UniProtKB"/>
</dbReference>
<dbReference type="GO" id="GO:0000172">
    <property type="term" value="C:ribonuclease MRP complex"/>
    <property type="evidence" value="ECO:0000318"/>
    <property type="project" value="GO_Central"/>
</dbReference>
<dbReference type="GO" id="GO:0004526">
    <property type="term" value="F:ribonuclease P activity"/>
    <property type="evidence" value="ECO:0007669"/>
    <property type="project" value="UniProtKB-EC"/>
</dbReference>
<dbReference type="GO" id="GO:0033204">
    <property type="term" value="F:ribonuclease P RNA binding"/>
    <property type="evidence" value="ECO:0000250"/>
    <property type="project" value="UniProtKB"/>
</dbReference>
<dbReference type="GO" id="GO:0006364">
    <property type="term" value="P:rRNA processing"/>
    <property type="evidence" value="ECO:0000318"/>
    <property type="project" value="GO_Central"/>
</dbReference>
<dbReference type="GO" id="GO:0001682">
    <property type="term" value="P:tRNA 5'-leader removal"/>
    <property type="evidence" value="ECO:0000250"/>
    <property type="project" value="UniProtKB"/>
</dbReference>
<dbReference type="GO" id="GO:0008033">
    <property type="term" value="P:tRNA processing"/>
    <property type="evidence" value="ECO:0000318"/>
    <property type="project" value="GO_Central"/>
</dbReference>
<dbReference type="FunFam" id="3.30.70.3250:FF:000001">
    <property type="entry name" value="Ribonuclease P/MRP protein subunit POP5"/>
    <property type="match status" value="1"/>
</dbReference>
<dbReference type="Gene3D" id="3.30.70.3250">
    <property type="entry name" value="Ribonuclease P, Pop5 subunit"/>
    <property type="match status" value="1"/>
</dbReference>
<dbReference type="InterPro" id="IPR002759">
    <property type="entry name" value="Pop5/Rpp14/Rnp2-like"/>
</dbReference>
<dbReference type="InterPro" id="IPR016819">
    <property type="entry name" value="RNase_P/MRP_POP5"/>
</dbReference>
<dbReference type="InterPro" id="IPR038085">
    <property type="entry name" value="Rnp2-like_sf"/>
</dbReference>
<dbReference type="PANTHER" id="PTHR48414">
    <property type="entry name" value="POP5 HOMOLOG, RIBONUCLEASE P_MRP SUBUNIT"/>
    <property type="match status" value="1"/>
</dbReference>
<dbReference type="PANTHER" id="PTHR48414:SF1">
    <property type="entry name" value="POP5 HOMOLOG, RIBONUCLEASE P_MRP SUBUNIT"/>
    <property type="match status" value="1"/>
</dbReference>
<dbReference type="Pfam" id="PF01900">
    <property type="entry name" value="RNase_P_Rpp14"/>
    <property type="match status" value="1"/>
</dbReference>
<dbReference type="PIRSF" id="PIRSF023803">
    <property type="entry name" value="Ribonuclease_P_prd"/>
    <property type="match status" value="1"/>
</dbReference>
<dbReference type="SUPFAM" id="SSF160350">
    <property type="entry name" value="Rnp2-like"/>
    <property type="match status" value="1"/>
</dbReference>
<reference key="1">
    <citation type="submission" date="2005-03" db="EMBL/GenBank/DDBJ databases">
        <authorList>
            <consortium name="NIH - Zebrafish Gene Collection (ZGC) project"/>
        </authorList>
    </citation>
    <scope>NUCLEOTIDE SEQUENCE [LARGE SCALE MRNA]</scope>
    <source>
        <tissue>Embryo</tissue>
    </source>
</reference>
<evidence type="ECO:0000250" key="1">
    <source>
        <dbReference type="UniProtKB" id="Q969H6"/>
    </source>
</evidence>
<evidence type="ECO:0000305" key="2"/>
<name>POP5_DANRE</name>
<gene>
    <name type="primary">pop5</name>
    <name type="ORF">zgc:110616</name>
</gene>